<reference key="1">
    <citation type="journal article" date="2000" name="Proc. Natl. Acad. Sci. U.S.A.">
        <title>Genome sequence of Halobacterium species NRC-1.</title>
        <authorList>
            <person name="Ng W.V."/>
            <person name="Kennedy S.P."/>
            <person name="Mahairas G.G."/>
            <person name="Berquist B."/>
            <person name="Pan M."/>
            <person name="Shukla H.D."/>
            <person name="Lasky S.R."/>
            <person name="Baliga N.S."/>
            <person name="Thorsson V."/>
            <person name="Sbrogna J."/>
            <person name="Swartzell S."/>
            <person name="Weir D."/>
            <person name="Hall J."/>
            <person name="Dahl T.A."/>
            <person name="Welti R."/>
            <person name="Goo Y.A."/>
            <person name="Leithauser B."/>
            <person name="Keller K."/>
            <person name="Cruz R."/>
            <person name="Danson M.J."/>
            <person name="Hough D.W."/>
            <person name="Maddocks D.G."/>
            <person name="Jablonski P.E."/>
            <person name="Krebs M.P."/>
            <person name="Angevine C.M."/>
            <person name="Dale H."/>
            <person name="Isenbarger T.A."/>
            <person name="Peck R.F."/>
            <person name="Pohlschroder M."/>
            <person name="Spudich J.L."/>
            <person name="Jung K.-H."/>
            <person name="Alam M."/>
            <person name="Freitas T."/>
            <person name="Hou S."/>
            <person name="Daniels C.J."/>
            <person name="Dennis P.P."/>
            <person name="Omer A.D."/>
            <person name="Ebhardt H."/>
            <person name="Lowe T.M."/>
            <person name="Liang P."/>
            <person name="Riley M."/>
            <person name="Hood L."/>
            <person name="DasSarma S."/>
        </authorList>
    </citation>
    <scope>NUCLEOTIDE SEQUENCE [LARGE SCALE GENOMIC DNA]</scope>
    <source>
        <strain>ATCC 700922 / JCM 11081 / NRC-1</strain>
    </source>
</reference>
<accession>P0CX06</accession>
<accession>P15740</accession>
<accession>Q9HM76</accession>
<comment type="function">
    <text evidence="1">DNA-dependent RNA polymerase (RNAP) catalyzes the transcription of DNA into RNA using the four ribonucleoside triphosphates as substrates.</text>
</comment>
<comment type="catalytic activity">
    <reaction evidence="1">
        <text>RNA(n) + a ribonucleoside 5'-triphosphate = RNA(n+1) + diphosphate</text>
        <dbReference type="Rhea" id="RHEA:21248"/>
        <dbReference type="Rhea" id="RHEA-COMP:14527"/>
        <dbReference type="Rhea" id="RHEA-COMP:17342"/>
        <dbReference type="ChEBI" id="CHEBI:33019"/>
        <dbReference type="ChEBI" id="CHEBI:61557"/>
        <dbReference type="ChEBI" id="CHEBI:140395"/>
        <dbReference type="EC" id="2.7.7.6"/>
    </reaction>
</comment>
<comment type="subunit">
    <text evidence="1">Part of the RNA polymerase complex.</text>
</comment>
<comment type="subcellular location">
    <subcellularLocation>
        <location evidence="1">Cytoplasm</location>
    </subcellularLocation>
</comment>
<comment type="similarity">
    <text evidence="1">Belongs to the archaeal Rpo5/eukaryotic RPB5 RNA polymerase subunit family.</text>
</comment>
<name>RPO5_HALSA</name>
<gene>
    <name evidence="1" type="primary">rpo5</name>
    <name evidence="1" type="synonym">rpoH</name>
    <name type="ordered locus">VNG_2668G</name>
</gene>
<sequence>MVDVSQHELVPEHTVLDEETLDGVLADYDIDRTELPKIKYKDPALPDNAEIGDVVEIVRDSRTTDEAVVYRLVIE</sequence>
<keyword id="KW-0963">Cytoplasm</keyword>
<keyword id="KW-0240">DNA-directed RNA polymerase</keyword>
<keyword id="KW-0548">Nucleotidyltransferase</keyword>
<keyword id="KW-1185">Reference proteome</keyword>
<keyword id="KW-0804">Transcription</keyword>
<keyword id="KW-0808">Transferase</keyword>
<feature type="chain" id="PRO_0000146090" description="DNA-directed RNA polymerase subunit Rpo5">
    <location>
        <begin position="1"/>
        <end position="75"/>
    </location>
</feature>
<organism>
    <name type="scientific">Halobacterium salinarum (strain ATCC 700922 / JCM 11081 / NRC-1)</name>
    <name type="common">Halobacterium halobium</name>
    <dbReference type="NCBI Taxonomy" id="64091"/>
    <lineage>
        <taxon>Archaea</taxon>
        <taxon>Methanobacteriati</taxon>
        <taxon>Methanobacteriota</taxon>
        <taxon>Stenosarchaea group</taxon>
        <taxon>Halobacteria</taxon>
        <taxon>Halobacteriales</taxon>
        <taxon>Halobacteriaceae</taxon>
        <taxon>Halobacterium</taxon>
        <taxon>Halobacterium salinarum NRC-34001</taxon>
    </lineage>
</organism>
<proteinExistence type="inferred from homology"/>
<evidence type="ECO:0000255" key="1">
    <source>
        <dbReference type="HAMAP-Rule" id="MF_00025"/>
    </source>
</evidence>
<dbReference type="EC" id="2.7.7.6" evidence="1"/>
<dbReference type="EMBL" id="AE004437">
    <property type="protein sequence ID" value="AAG20695.1"/>
    <property type="molecule type" value="Genomic_DNA"/>
</dbReference>
<dbReference type="PIR" id="C84416">
    <property type="entry name" value="C84416"/>
</dbReference>
<dbReference type="RefSeq" id="WP_010903999.1">
    <property type="nucleotide sequence ID" value="NC_002607.1"/>
</dbReference>
<dbReference type="SMR" id="P0CX06"/>
<dbReference type="FunCoup" id="P0CX06">
    <property type="interactions" value="2"/>
</dbReference>
<dbReference type="STRING" id="64091.VNG_2668G"/>
<dbReference type="PaxDb" id="64091-VNG_2668G"/>
<dbReference type="KEGG" id="hal:VNG_2668G"/>
<dbReference type="PATRIC" id="fig|64091.14.peg.2072"/>
<dbReference type="HOGENOM" id="CLU_058320_4_0_2"/>
<dbReference type="InParanoid" id="P0CX06"/>
<dbReference type="OrthoDB" id="30537at2157"/>
<dbReference type="PhylomeDB" id="P0CX06"/>
<dbReference type="Proteomes" id="UP000000554">
    <property type="component" value="Chromosome"/>
</dbReference>
<dbReference type="GO" id="GO:0005737">
    <property type="term" value="C:cytoplasm"/>
    <property type="evidence" value="ECO:0007669"/>
    <property type="project" value="UniProtKB-SubCell"/>
</dbReference>
<dbReference type="GO" id="GO:0000428">
    <property type="term" value="C:DNA-directed RNA polymerase complex"/>
    <property type="evidence" value="ECO:0007669"/>
    <property type="project" value="UniProtKB-KW"/>
</dbReference>
<dbReference type="GO" id="GO:0003677">
    <property type="term" value="F:DNA binding"/>
    <property type="evidence" value="ECO:0007669"/>
    <property type="project" value="InterPro"/>
</dbReference>
<dbReference type="GO" id="GO:0003899">
    <property type="term" value="F:DNA-directed RNA polymerase activity"/>
    <property type="evidence" value="ECO:0007669"/>
    <property type="project" value="UniProtKB-UniRule"/>
</dbReference>
<dbReference type="GO" id="GO:0006351">
    <property type="term" value="P:DNA-templated transcription"/>
    <property type="evidence" value="ECO:0007669"/>
    <property type="project" value="UniProtKB-UniRule"/>
</dbReference>
<dbReference type="Gene3D" id="3.90.940.20">
    <property type="entry name" value="RPB5-like RNA polymerase subunit"/>
    <property type="match status" value="1"/>
</dbReference>
<dbReference type="HAMAP" id="MF_00025">
    <property type="entry name" value="RNApol_Rpo5_RPB5"/>
    <property type="match status" value="1"/>
</dbReference>
<dbReference type="InterPro" id="IPR014381">
    <property type="entry name" value="Arch_Rpo5/euc_Rpb5"/>
</dbReference>
<dbReference type="InterPro" id="IPR000783">
    <property type="entry name" value="RNA_pol_subH/Rpb5_C"/>
</dbReference>
<dbReference type="InterPro" id="IPR020608">
    <property type="entry name" value="RNA_pol_subH/Rpb5_CS"/>
</dbReference>
<dbReference type="InterPro" id="IPR035913">
    <property type="entry name" value="RPB5-like_sf"/>
</dbReference>
<dbReference type="NCBIfam" id="NF007129">
    <property type="entry name" value="PRK09570.1"/>
    <property type="match status" value="1"/>
</dbReference>
<dbReference type="Pfam" id="PF01191">
    <property type="entry name" value="RNA_pol_Rpb5_C"/>
    <property type="match status" value="1"/>
</dbReference>
<dbReference type="SUPFAM" id="SSF55287">
    <property type="entry name" value="RPB5-like RNA polymerase subunit"/>
    <property type="match status" value="1"/>
</dbReference>
<dbReference type="PROSITE" id="PS01110">
    <property type="entry name" value="RNA_POL_H_23KD"/>
    <property type="match status" value="1"/>
</dbReference>
<protein>
    <recommendedName>
        <fullName evidence="1">DNA-directed RNA polymerase subunit Rpo5</fullName>
        <ecNumber evidence="1">2.7.7.6</ecNumber>
    </recommendedName>
    <alternativeName>
        <fullName evidence="1">DNA-directed RNA polymerase subunit H</fullName>
    </alternativeName>
</protein>